<dbReference type="EMBL" id="CP000886">
    <property type="protein sequence ID" value="ABX65537.1"/>
    <property type="molecule type" value="Genomic_DNA"/>
</dbReference>
<dbReference type="RefSeq" id="WP_000692185.1">
    <property type="nucleotide sequence ID" value="NC_010102.1"/>
</dbReference>
<dbReference type="SMR" id="A9MYK3"/>
<dbReference type="KEGG" id="spq:SPAB_00094"/>
<dbReference type="PATRIC" id="fig|1016998.12.peg.90"/>
<dbReference type="HOGENOM" id="CLU_060196_2_2_6"/>
<dbReference type="BioCyc" id="SENT1016998:SPAB_RS00375-MONOMER"/>
<dbReference type="UniPathway" id="UPA00117"/>
<dbReference type="Proteomes" id="UP000008556">
    <property type="component" value="Chromosome"/>
</dbReference>
<dbReference type="GO" id="GO:0009055">
    <property type="term" value="F:electron transfer activity"/>
    <property type="evidence" value="ECO:0007669"/>
    <property type="project" value="InterPro"/>
</dbReference>
<dbReference type="GO" id="GO:0009437">
    <property type="term" value="P:carnitine metabolic process"/>
    <property type="evidence" value="ECO:0007669"/>
    <property type="project" value="UniProtKB-UniRule"/>
</dbReference>
<dbReference type="CDD" id="cd01714">
    <property type="entry name" value="ETF_beta"/>
    <property type="match status" value="1"/>
</dbReference>
<dbReference type="FunFam" id="3.40.50.620:FF:000072">
    <property type="entry name" value="Protein FixA homolog"/>
    <property type="match status" value="1"/>
</dbReference>
<dbReference type="Gene3D" id="3.40.50.620">
    <property type="entry name" value="HUPs"/>
    <property type="match status" value="1"/>
</dbReference>
<dbReference type="HAMAP" id="MF_01055">
    <property type="entry name" value="FixA"/>
    <property type="match status" value="1"/>
</dbReference>
<dbReference type="InterPro" id="IPR000049">
    <property type="entry name" value="ET-Flavoprotein_bsu_CS"/>
</dbReference>
<dbReference type="InterPro" id="IPR014730">
    <property type="entry name" value="ETF_a/b_N"/>
</dbReference>
<dbReference type="InterPro" id="IPR012255">
    <property type="entry name" value="ETF_b"/>
</dbReference>
<dbReference type="InterPro" id="IPR033948">
    <property type="entry name" value="ETF_beta_N"/>
</dbReference>
<dbReference type="InterPro" id="IPR023463">
    <property type="entry name" value="FixA"/>
</dbReference>
<dbReference type="InterPro" id="IPR014729">
    <property type="entry name" value="Rossmann-like_a/b/a_fold"/>
</dbReference>
<dbReference type="NCBIfam" id="NF002888">
    <property type="entry name" value="PRK03359.1"/>
    <property type="match status" value="1"/>
</dbReference>
<dbReference type="PANTHER" id="PTHR21294">
    <property type="entry name" value="ELECTRON TRANSFER FLAVOPROTEIN BETA-SUBUNIT"/>
    <property type="match status" value="1"/>
</dbReference>
<dbReference type="PANTHER" id="PTHR21294:SF17">
    <property type="entry name" value="PROTEIN FIXA"/>
    <property type="match status" value="1"/>
</dbReference>
<dbReference type="Pfam" id="PF01012">
    <property type="entry name" value="ETF"/>
    <property type="match status" value="1"/>
</dbReference>
<dbReference type="PIRSF" id="PIRSF000090">
    <property type="entry name" value="Beta-ETF"/>
    <property type="match status" value="1"/>
</dbReference>
<dbReference type="SMART" id="SM00893">
    <property type="entry name" value="ETF"/>
    <property type="match status" value="1"/>
</dbReference>
<dbReference type="SUPFAM" id="SSF52402">
    <property type="entry name" value="Adenine nucleotide alpha hydrolases-like"/>
    <property type="match status" value="1"/>
</dbReference>
<dbReference type="PROSITE" id="PS01065">
    <property type="entry name" value="ETF_BETA"/>
    <property type="match status" value="1"/>
</dbReference>
<comment type="function">
    <text evidence="1">Required for anaerobic carnitine reduction. May bring reductant to CaiA.</text>
</comment>
<comment type="pathway">
    <text evidence="1">Amine and polyamine metabolism; carnitine metabolism.</text>
</comment>
<comment type="subunit">
    <text evidence="1">Heterodimer of FixA and FixB.</text>
</comment>
<comment type="similarity">
    <text evidence="1">Belongs to the ETF beta-subunit/FixA family.</text>
</comment>
<keyword id="KW-0249">Electron transport</keyword>
<keyword id="KW-0813">Transport</keyword>
<evidence type="ECO:0000255" key="1">
    <source>
        <dbReference type="HAMAP-Rule" id="MF_01055"/>
    </source>
</evidence>
<proteinExistence type="inferred from homology"/>
<name>FIXA_SALPB</name>
<gene>
    <name evidence="1" type="primary">fixA</name>
    <name type="ordered locus">SPAB_00094</name>
</gene>
<feature type="chain" id="PRO_1000084434" description="Protein FixA">
    <location>
        <begin position="1"/>
        <end position="256"/>
    </location>
</feature>
<organism>
    <name type="scientific">Salmonella paratyphi B (strain ATCC BAA-1250 / SPB7)</name>
    <dbReference type="NCBI Taxonomy" id="1016998"/>
    <lineage>
        <taxon>Bacteria</taxon>
        <taxon>Pseudomonadati</taxon>
        <taxon>Pseudomonadota</taxon>
        <taxon>Gammaproteobacteria</taxon>
        <taxon>Enterobacterales</taxon>
        <taxon>Enterobacteriaceae</taxon>
        <taxon>Salmonella</taxon>
    </lineage>
</organism>
<accession>A9MYK3</accession>
<reference key="1">
    <citation type="submission" date="2007-11" db="EMBL/GenBank/DDBJ databases">
        <authorList>
            <consortium name="The Salmonella enterica serovar Paratyphi B Genome Sequencing Project"/>
            <person name="McClelland M."/>
            <person name="Sanderson E.K."/>
            <person name="Porwollik S."/>
            <person name="Spieth J."/>
            <person name="Clifton W.S."/>
            <person name="Fulton R."/>
            <person name="Cordes M."/>
            <person name="Wollam A."/>
            <person name="Shah N."/>
            <person name="Pepin K."/>
            <person name="Bhonagiri V."/>
            <person name="Nash W."/>
            <person name="Johnson M."/>
            <person name="Thiruvilangam P."/>
            <person name="Wilson R."/>
        </authorList>
    </citation>
    <scope>NUCLEOTIDE SEQUENCE [LARGE SCALE GENOMIC DNA]</scope>
    <source>
        <strain>ATCC BAA-1250 / SPB7</strain>
    </source>
</reference>
<protein>
    <recommendedName>
        <fullName evidence="1">Protein FixA</fullName>
    </recommendedName>
</protein>
<sequence>MKIITCYKCVPDEQDIAINNADGTLDFSKADSKISQYDLNAIEAACQLKQQLGDAQVVAMSVGGKALTNAKGRKDVLSRGPDELIVVIDDQFEQALPQHTATALAAAAQKSGFDLLICGDGSSDLYAQQVGLLVGEALNIPAINGVSKILSLTDSTLTVERELEDEVETLSIPLPAVIAVSTDINTPQIPSMKAILGAAKKPVQVWSPADIGLNSVPAYSAQQVAAPKQRERQRVVIEGDGEEQIAAFVENLRKII</sequence>